<accession>A6T5H1</accession>
<comment type="function">
    <text evidence="1">Converts heme B (protoheme IX) to heme O by substitution of the vinyl group on carbon 2 of heme B porphyrin ring with a hydroxyethyl farnesyl side group.</text>
</comment>
<comment type="catalytic activity">
    <reaction evidence="1">
        <text>heme b + (2E,6E)-farnesyl diphosphate + H2O = Fe(II)-heme o + diphosphate</text>
        <dbReference type="Rhea" id="RHEA:28070"/>
        <dbReference type="ChEBI" id="CHEBI:15377"/>
        <dbReference type="ChEBI" id="CHEBI:33019"/>
        <dbReference type="ChEBI" id="CHEBI:60344"/>
        <dbReference type="ChEBI" id="CHEBI:60530"/>
        <dbReference type="ChEBI" id="CHEBI:175763"/>
        <dbReference type="EC" id="2.5.1.141"/>
    </reaction>
</comment>
<comment type="pathway">
    <text evidence="1">Porphyrin-containing compound metabolism; heme O biosynthesis; heme O from protoheme: step 1/1.</text>
</comment>
<comment type="subcellular location">
    <subcellularLocation>
        <location evidence="1">Cell inner membrane</location>
        <topology evidence="1">Multi-pass membrane protein</topology>
    </subcellularLocation>
</comment>
<comment type="miscellaneous">
    <text evidence="1">Carbon 2 of the heme B porphyrin ring is defined according to the Fischer nomenclature.</text>
</comment>
<comment type="similarity">
    <text evidence="1">Belongs to the UbiA prenyltransferase family. Protoheme IX farnesyltransferase subfamily.</text>
</comment>
<sequence>MFKQYLQVTKPGIIFGNLISVIGGFLLASKGHIDYPLFVWTLLGVSLVVASGCVFNNYIDRDIDRKMERTKNRVLVKGLISPEASLVYATLLGIAGFMLLWFGANPLACWLGVMGFVVYVGVYSLYMKRHSVYGTLIGSLSGAAPPVIGYCAVTGDFDSGAAILLAIFSLWQMPHSYAIAIFRFKDYQAANIPVLPVVKGISVAKNHITLYIVAFAVATLMLSLGGYAGYKYLVVAAAVSVWWLGMALRGYKVADDKVWARKLFVFSIVAITALSVMMSVDFMVPDSHSLLAYVR</sequence>
<keyword id="KW-0997">Cell inner membrane</keyword>
<keyword id="KW-1003">Cell membrane</keyword>
<keyword id="KW-0350">Heme biosynthesis</keyword>
<keyword id="KW-0472">Membrane</keyword>
<keyword id="KW-0808">Transferase</keyword>
<keyword id="KW-0812">Transmembrane</keyword>
<keyword id="KW-1133">Transmembrane helix</keyword>
<organism>
    <name type="scientific">Klebsiella pneumoniae subsp. pneumoniae (strain ATCC 700721 / MGH 78578)</name>
    <dbReference type="NCBI Taxonomy" id="272620"/>
    <lineage>
        <taxon>Bacteria</taxon>
        <taxon>Pseudomonadati</taxon>
        <taxon>Pseudomonadota</taxon>
        <taxon>Gammaproteobacteria</taxon>
        <taxon>Enterobacterales</taxon>
        <taxon>Enterobacteriaceae</taxon>
        <taxon>Klebsiella/Raoultella group</taxon>
        <taxon>Klebsiella</taxon>
        <taxon>Klebsiella pneumoniae complex</taxon>
    </lineage>
</organism>
<name>CYOE_KLEP7</name>
<proteinExistence type="inferred from homology"/>
<reference key="1">
    <citation type="submission" date="2006-09" db="EMBL/GenBank/DDBJ databases">
        <authorList>
            <consortium name="The Klebsiella pneumonia Genome Sequencing Project"/>
            <person name="McClelland M."/>
            <person name="Sanderson E.K."/>
            <person name="Spieth J."/>
            <person name="Clifton W.S."/>
            <person name="Latreille P."/>
            <person name="Sabo A."/>
            <person name="Pepin K."/>
            <person name="Bhonagiri V."/>
            <person name="Porwollik S."/>
            <person name="Ali J."/>
            <person name="Wilson R.K."/>
        </authorList>
    </citation>
    <scope>NUCLEOTIDE SEQUENCE [LARGE SCALE GENOMIC DNA]</scope>
    <source>
        <strain>ATCC 700721 / MGH 78578</strain>
    </source>
</reference>
<feature type="chain" id="PRO_0000326904" description="Protoheme IX farnesyltransferase">
    <location>
        <begin position="1"/>
        <end position="295"/>
    </location>
</feature>
<feature type="transmembrane region" description="Helical" evidence="1">
    <location>
        <begin position="8"/>
        <end position="28"/>
    </location>
</feature>
<feature type="transmembrane region" description="Helical" evidence="1">
    <location>
        <begin position="35"/>
        <end position="55"/>
    </location>
</feature>
<feature type="transmembrane region" description="Helical" evidence="1">
    <location>
        <begin position="84"/>
        <end position="104"/>
    </location>
</feature>
<feature type="transmembrane region" description="Helical" evidence="1">
    <location>
        <begin position="107"/>
        <end position="127"/>
    </location>
</feature>
<feature type="transmembrane region" description="Helical" evidence="1">
    <location>
        <begin position="132"/>
        <end position="152"/>
    </location>
</feature>
<feature type="transmembrane region" description="Helical" evidence="1">
    <location>
        <begin position="162"/>
        <end position="182"/>
    </location>
</feature>
<feature type="transmembrane region" description="Helical" evidence="1">
    <location>
        <begin position="208"/>
        <end position="228"/>
    </location>
</feature>
<feature type="transmembrane region" description="Helical" evidence="1">
    <location>
        <begin position="233"/>
        <end position="253"/>
    </location>
</feature>
<feature type="transmembrane region" description="Helical" evidence="1">
    <location>
        <begin position="264"/>
        <end position="284"/>
    </location>
</feature>
<dbReference type="EC" id="2.5.1.141" evidence="1"/>
<dbReference type="EMBL" id="CP000647">
    <property type="protein sequence ID" value="ABR75842.1"/>
    <property type="molecule type" value="Genomic_DNA"/>
</dbReference>
<dbReference type="RefSeq" id="WP_002891629.1">
    <property type="nucleotide sequence ID" value="NC_009648.1"/>
</dbReference>
<dbReference type="SMR" id="A6T5H1"/>
<dbReference type="STRING" id="272620.KPN_00390"/>
<dbReference type="PaxDb" id="272620-KPN_00390"/>
<dbReference type="EnsemblBacteria" id="ABR75842">
    <property type="protein sequence ID" value="ABR75842"/>
    <property type="gene ID" value="KPN_00390"/>
</dbReference>
<dbReference type="GeneID" id="93274709"/>
<dbReference type="KEGG" id="kpn:KPN_00390"/>
<dbReference type="HOGENOM" id="CLU_029631_0_0_6"/>
<dbReference type="UniPathway" id="UPA00834">
    <property type="reaction ID" value="UER00712"/>
</dbReference>
<dbReference type="Proteomes" id="UP000000265">
    <property type="component" value="Chromosome"/>
</dbReference>
<dbReference type="GO" id="GO:0005886">
    <property type="term" value="C:plasma membrane"/>
    <property type="evidence" value="ECO:0007669"/>
    <property type="project" value="UniProtKB-SubCell"/>
</dbReference>
<dbReference type="GO" id="GO:0008495">
    <property type="term" value="F:protoheme IX farnesyltransferase activity"/>
    <property type="evidence" value="ECO:0007669"/>
    <property type="project" value="UniProtKB-UniRule"/>
</dbReference>
<dbReference type="GO" id="GO:0048034">
    <property type="term" value="P:heme O biosynthetic process"/>
    <property type="evidence" value="ECO:0007669"/>
    <property type="project" value="UniProtKB-UniRule"/>
</dbReference>
<dbReference type="CDD" id="cd13957">
    <property type="entry name" value="PT_UbiA_Cox10"/>
    <property type="match status" value="1"/>
</dbReference>
<dbReference type="FunFam" id="1.10.357.140:FF:000001">
    <property type="entry name" value="Protoheme IX farnesyltransferase"/>
    <property type="match status" value="1"/>
</dbReference>
<dbReference type="Gene3D" id="1.10.357.140">
    <property type="entry name" value="UbiA prenyltransferase"/>
    <property type="match status" value="1"/>
</dbReference>
<dbReference type="HAMAP" id="MF_00154">
    <property type="entry name" value="CyoE_CtaB"/>
    <property type="match status" value="1"/>
</dbReference>
<dbReference type="InterPro" id="IPR006369">
    <property type="entry name" value="Protohaem_IX_farnesylTrfase"/>
</dbReference>
<dbReference type="InterPro" id="IPR000537">
    <property type="entry name" value="UbiA_prenyltransferase"/>
</dbReference>
<dbReference type="InterPro" id="IPR030470">
    <property type="entry name" value="UbiA_prenylTrfase_CS"/>
</dbReference>
<dbReference type="InterPro" id="IPR044878">
    <property type="entry name" value="UbiA_sf"/>
</dbReference>
<dbReference type="NCBIfam" id="TIGR01473">
    <property type="entry name" value="cyoE_ctaB"/>
    <property type="match status" value="1"/>
</dbReference>
<dbReference type="NCBIfam" id="NF003348">
    <property type="entry name" value="PRK04375.1-1"/>
    <property type="match status" value="1"/>
</dbReference>
<dbReference type="PANTHER" id="PTHR43448">
    <property type="entry name" value="PROTOHEME IX FARNESYLTRANSFERASE, MITOCHONDRIAL"/>
    <property type="match status" value="1"/>
</dbReference>
<dbReference type="PANTHER" id="PTHR43448:SF2">
    <property type="entry name" value="PROTOHEME IX FARNESYLTRANSFERASE, MITOCHONDRIAL"/>
    <property type="match status" value="1"/>
</dbReference>
<dbReference type="Pfam" id="PF01040">
    <property type="entry name" value="UbiA"/>
    <property type="match status" value="1"/>
</dbReference>
<dbReference type="PROSITE" id="PS00943">
    <property type="entry name" value="UBIA"/>
    <property type="match status" value="1"/>
</dbReference>
<evidence type="ECO:0000255" key="1">
    <source>
        <dbReference type="HAMAP-Rule" id="MF_00154"/>
    </source>
</evidence>
<gene>
    <name evidence="1" type="primary">cyoE</name>
    <name type="ordered locus">KPN78578_03810</name>
    <name type="ORF">KPN_00390</name>
</gene>
<protein>
    <recommendedName>
        <fullName evidence="1">Protoheme IX farnesyltransferase</fullName>
        <ecNumber evidence="1">2.5.1.141</ecNumber>
    </recommendedName>
    <alternativeName>
        <fullName evidence="1">Heme B farnesyltransferase</fullName>
    </alternativeName>
    <alternativeName>
        <fullName evidence="1">Heme O synthase</fullName>
    </alternativeName>
</protein>